<reference key="1">
    <citation type="journal article" date="2010" name="Genome Biol. Evol.">
        <title>Continuing evolution of Burkholderia mallei through genome reduction and large-scale rearrangements.</title>
        <authorList>
            <person name="Losada L."/>
            <person name="Ronning C.M."/>
            <person name="DeShazer D."/>
            <person name="Woods D."/>
            <person name="Fedorova N."/>
            <person name="Kim H.S."/>
            <person name="Shabalina S.A."/>
            <person name="Pearson T.R."/>
            <person name="Brinkac L."/>
            <person name="Tan P."/>
            <person name="Nandi T."/>
            <person name="Crabtree J."/>
            <person name="Badger J."/>
            <person name="Beckstrom-Sternberg S."/>
            <person name="Saqib M."/>
            <person name="Schutzer S.E."/>
            <person name="Keim P."/>
            <person name="Nierman W.C."/>
        </authorList>
    </citation>
    <scope>NUCLEOTIDE SEQUENCE [LARGE SCALE GENOMIC DNA]</scope>
    <source>
        <strain>1710b</strain>
    </source>
</reference>
<comment type="function">
    <text evidence="1">NDH-1 shuttles electrons from NADH, via FMN and iron-sulfur (Fe-S) centers, to quinones in the respiratory chain. Couples the redox reaction to proton translocation (for every two electrons transferred, four hydrogen ions are translocated across the cytoplasmic membrane), and thus conserves the redox energy in a proton gradient (By similarity).</text>
</comment>
<comment type="catalytic activity">
    <reaction evidence="2">
        <text>a quinone + NADH + 5 H(+)(in) = a quinol + NAD(+) + 4 H(+)(out)</text>
        <dbReference type="Rhea" id="RHEA:57888"/>
        <dbReference type="ChEBI" id="CHEBI:15378"/>
        <dbReference type="ChEBI" id="CHEBI:24646"/>
        <dbReference type="ChEBI" id="CHEBI:57540"/>
        <dbReference type="ChEBI" id="CHEBI:57945"/>
        <dbReference type="ChEBI" id="CHEBI:132124"/>
    </reaction>
</comment>
<comment type="cofactor">
    <cofactor evidence="2">
        <name>[4Fe-4S] cluster</name>
        <dbReference type="ChEBI" id="CHEBI:49883"/>
    </cofactor>
    <text evidence="2">Binds 1 [4Fe-4S] cluster.</text>
</comment>
<comment type="subunit">
    <text evidence="2">NDH-1 is composed of 14 different subunits. Subunits NuoB, C, D, E, F, and G constitute the peripheral sector of the complex.</text>
</comment>
<comment type="subcellular location">
    <subcellularLocation>
        <location evidence="2">Cell inner membrane</location>
        <topology evidence="2">Peripheral membrane protein</topology>
        <orientation evidence="2">Cytoplasmic side</orientation>
    </subcellularLocation>
</comment>
<comment type="similarity">
    <text evidence="2">Belongs to the complex I 20 kDa subunit family.</text>
</comment>
<comment type="sequence caution" evidence="3">
    <conflict type="erroneous initiation">
        <sequence resource="EMBL-CDS" id="ABA47493"/>
    </conflict>
</comment>
<sequence length="159" mass="17533">MSIEGVLKEGFVTTTADKLINWTRTGSLWPMTFGLACCAVEMMHAGAARYDLDRFGVVFRPSPRQSDVMIVAGTLCNKMAPALRRVYDQMAEPRWVISMGSCANGGGYYHYSYSVVRGCDRIVPVDVYVPGCPPTAEALVYGVIQLQAKIRRTSTIARQ</sequence>
<protein>
    <recommendedName>
        <fullName evidence="2">NADH-quinone oxidoreductase subunit B 1</fullName>
        <ecNumber evidence="2">7.1.1.-</ecNumber>
    </recommendedName>
    <alternativeName>
        <fullName evidence="2">NADH dehydrogenase I subunit B 1</fullName>
    </alternativeName>
    <alternativeName>
        <fullName evidence="2">NDH-1 subunit B 1</fullName>
    </alternativeName>
</protein>
<accession>Q3JUA8</accession>
<keyword id="KW-0004">4Fe-4S</keyword>
<keyword id="KW-0997">Cell inner membrane</keyword>
<keyword id="KW-1003">Cell membrane</keyword>
<keyword id="KW-0408">Iron</keyword>
<keyword id="KW-0411">Iron-sulfur</keyword>
<keyword id="KW-0472">Membrane</keyword>
<keyword id="KW-0479">Metal-binding</keyword>
<keyword id="KW-0520">NAD</keyword>
<keyword id="KW-0874">Quinone</keyword>
<keyword id="KW-1278">Translocase</keyword>
<keyword id="KW-0813">Transport</keyword>
<keyword id="KW-0830">Ubiquinone</keyword>
<gene>
    <name evidence="2" type="primary">nuoB1</name>
    <name type="ordered locus">BURPS1710b_1436</name>
</gene>
<dbReference type="EC" id="7.1.1.-" evidence="2"/>
<dbReference type="EMBL" id="CP000124">
    <property type="protein sequence ID" value="ABA47493.1"/>
    <property type="status" value="ALT_INIT"/>
    <property type="molecule type" value="Genomic_DNA"/>
</dbReference>
<dbReference type="RefSeq" id="WP_004186402.1">
    <property type="nucleotide sequence ID" value="NC_007434.1"/>
</dbReference>
<dbReference type="SMR" id="Q3JUA8"/>
<dbReference type="EnsemblBacteria" id="ABA47493">
    <property type="protein sequence ID" value="ABA47493"/>
    <property type="gene ID" value="BURPS1710b_1436"/>
</dbReference>
<dbReference type="KEGG" id="bpm:BURPS1710b_1436"/>
<dbReference type="HOGENOM" id="CLU_055737_7_3_4"/>
<dbReference type="Proteomes" id="UP000002700">
    <property type="component" value="Chromosome I"/>
</dbReference>
<dbReference type="GO" id="GO:0005886">
    <property type="term" value="C:plasma membrane"/>
    <property type="evidence" value="ECO:0007669"/>
    <property type="project" value="UniProtKB-SubCell"/>
</dbReference>
<dbReference type="GO" id="GO:0045271">
    <property type="term" value="C:respiratory chain complex I"/>
    <property type="evidence" value="ECO:0007669"/>
    <property type="project" value="TreeGrafter"/>
</dbReference>
<dbReference type="GO" id="GO:0051539">
    <property type="term" value="F:4 iron, 4 sulfur cluster binding"/>
    <property type="evidence" value="ECO:0007669"/>
    <property type="project" value="UniProtKB-KW"/>
</dbReference>
<dbReference type="GO" id="GO:0005506">
    <property type="term" value="F:iron ion binding"/>
    <property type="evidence" value="ECO:0007669"/>
    <property type="project" value="UniProtKB-UniRule"/>
</dbReference>
<dbReference type="GO" id="GO:0008137">
    <property type="term" value="F:NADH dehydrogenase (ubiquinone) activity"/>
    <property type="evidence" value="ECO:0007669"/>
    <property type="project" value="InterPro"/>
</dbReference>
<dbReference type="GO" id="GO:0050136">
    <property type="term" value="F:NADH:ubiquinone reductase (non-electrogenic) activity"/>
    <property type="evidence" value="ECO:0007669"/>
    <property type="project" value="UniProtKB-UniRule"/>
</dbReference>
<dbReference type="GO" id="GO:0048038">
    <property type="term" value="F:quinone binding"/>
    <property type="evidence" value="ECO:0007669"/>
    <property type="project" value="UniProtKB-KW"/>
</dbReference>
<dbReference type="GO" id="GO:0009060">
    <property type="term" value="P:aerobic respiration"/>
    <property type="evidence" value="ECO:0007669"/>
    <property type="project" value="TreeGrafter"/>
</dbReference>
<dbReference type="GO" id="GO:0015990">
    <property type="term" value="P:electron transport coupled proton transport"/>
    <property type="evidence" value="ECO:0007669"/>
    <property type="project" value="TreeGrafter"/>
</dbReference>
<dbReference type="FunFam" id="3.40.50.12280:FF:000001">
    <property type="entry name" value="NADH-quinone oxidoreductase subunit B 2"/>
    <property type="match status" value="1"/>
</dbReference>
<dbReference type="Gene3D" id="3.40.50.12280">
    <property type="match status" value="1"/>
</dbReference>
<dbReference type="HAMAP" id="MF_01356">
    <property type="entry name" value="NDH1_NuoB"/>
    <property type="match status" value="1"/>
</dbReference>
<dbReference type="InterPro" id="IPR006137">
    <property type="entry name" value="NADH_UbQ_OxRdtase-like_20kDa"/>
</dbReference>
<dbReference type="InterPro" id="IPR006138">
    <property type="entry name" value="NADH_UQ_OxRdtase_20Kd_su"/>
</dbReference>
<dbReference type="NCBIfam" id="TIGR01957">
    <property type="entry name" value="nuoB_fam"/>
    <property type="match status" value="1"/>
</dbReference>
<dbReference type="NCBIfam" id="NF005012">
    <property type="entry name" value="PRK06411.1"/>
    <property type="match status" value="1"/>
</dbReference>
<dbReference type="PANTHER" id="PTHR11995">
    <property type="entry name" value="NADH DEHYDROGENASE"/>
    <property type="match status" value="1"/>
</dbReference>
<dbReference type="PANTHER" id="PTHR11995:SF14">
    <property type="entry name" value="NADH DEHYDROGENASE [UBIQUINONE] IRON-SULFUR PROTEIN 7, MITOCHONDRIAL"/>
    <property type="match status" value="1"/>
</dbReference>
<dbReference type="Pfam" id="PF01058">
    <property type="entry name" value="Oxidored_q6"/>
    <property type="match status" value="1"/>
</dbReference>
<dbReference type="SUPFAM" id="SSF56770">
    <property type="entry name" value="HydA/Nqo6-like"/>
    <property type="match status" value="1"/>
</dbReference>
<dbReference type="PROSITE" id="PS01150">
    <property type="entry name" value="COMPLEX1_20K"/>
    <property type="match status" value="1"/>
</dbReference>
<evidence type="ECO:0000250" key="1"/>
<evidence type="ECO:0000255" key="2">
    <source>
        <dbReference type="HAMAP-Rule" id="MF_01356"/>
    </source>
</evidence>
<evidence type="ECO:0000305" key="3"/>
<organism>
    <name type="scientific">Burkholderia pseudomallei (strain 1710b)</name>
    <dbReference type="NCBI Taxonomy" id="320372"/>
    <lineage>
        <taxon>Bacteria</taxon>
        <taxon>Pseudomonadati</taxon>
        <taxon>Pseudomonadota</taxon>
        <taxon>Betaproteobacteria</taxon>
        <taxon>Burkholderiales</taxon>
        <taxon>Burkholderiaceae</taxon>
        <taxon>Burkholderia</taxon>
        <taxon>pseudomallei group</taxon>
    </lineage>
</organism>
<proteinExistence type="inferred from homology"/>
<feature type="chain" id="PRO_0000358384" description="NADH-quinone oxidoreductase subunit B 1">
    <location>
        <begin position="1"/>
        <end position="159"/>
    </location>
</feature>
<feature type="binding site" evidence="2">
    <location>
        <position position="37"/>
    </location>
    <ligand>
        <name>[4Fe-4S] cluster</name>
        <dbReference type="ChEBI" id="CHEBI:49883"/>
    </ligand>
</feature>
<feature type="binding site" evidence="2">
    <location>
        <position position="38"/>
    </location>
    <ligand>
        <name>[4Fe-4S] cluster</name>
        <dbReference type="ChEBI" id="CHEBI:49883"/>
    </ligand>
</feature>
<feature type="binding site" evidence="2">
    <location>
        <position position="102"/>
    </location>
    <ligand>
        <name>[4Fe-4S] cluster</name>
        <dbReference type="ChEBI" id="CHEBI:49883"/>
    </ligand>
</feature>
<feature type="binding site" evidence="2">
    <location>
        <position position="132"/>
    </location>
    <ligand>
        <name>[4Fe-4S] cluster</name>
        <dbReference type="ChEBI" id="CHEBI:49883"/>
    </ligand>
</feature>
<name>NUOB1_BURP1</name>